<gene>
    <name evidence="1" type="primary">nuoB1</name>
    <name type="ordered locus">RHE_CH01603</name>
</gene>
<feature type="chain" id="PRO_0000376324" description="NADH-quinone oxidoreductase subunit B 1">
    <location>
        <begin position="1"/>
        <end position="194"/>
    </location>
</feature>
<feature type="region of interest" description="Disordered" evidence="2">
    <location>
        <begin position="1"/>
        <end position="23"/>
    </location>
</feature>
<feature type="compositionally biased region" description="Polar residues" evidence="2">
    <location>
        <begin position="1"/>
        <end position="12"/>
    </location>
</feature>
<feature type="binding site" evidence="1">
    <location>
        <position position="73"/>
    </location>
    <ligand>
        <name>[4Fe-4S] cluster</name>
        <dbReference type="ChEBI" id="CHEBI:49883"/>
    </ligand>
</feature>
<feature type="binding site" evidence="1">
    <location>
        <position position="74"/>
    </location>
    <ligand>
        <name>[4Fe-4S] cluster</name>
        <dbReference type="ChEBI" id="CHEBI:49883"/>
    </ligand>
</feature>
<feature type="binding site" evidence="1">
    <location>
        <position position="138"/>
    </location>
    <ligand>
        <name>[4Fe-4S] cluster</name>
        <dbReference type="ChEBI" id="CHEBI:49883"/>
    </ligand>
</feature>
<feature type="binding site" evidence="1">
    <location>
        <position position="168"/>
    </location>
    <ligand>
        <name>[4Fe-4S] cluster</name>
        <dbReference type="ChEBI" id="CHEBI:49883"/>
    </ligand>
</feature>
<dbReference type="EC" id="7.1.1.-" evidence="1"/>
<dbReference type="EMBL" id="CP000133">
    <property type="protein sequence ID" value="ABC90402.1"/>
    <property type="molecule type" value="Genomic_DNA"/>
</dbReference>
<dbReference type="RefSeq" id="WP_008521904.1">
    <property type="nucleotide sequence ID" value="NC_007761.1"/>
</dbReference>
<dbReference type="SMR" id="Q2K9T4"/>
<dbReference type="KEGG" id="ret:RHE_CH01603"/>
<dbReference type="eggNOG" id="COG0377">
    <property type="taxonomic scope" value="Bacteria"/>
</dbReference>
<dbReference type="HOGENOM" id="CLU_055737_7_0_5"/>
<dbReference type="OrthoDB" id="9786737at2"/>
<dbReference type="Proteomes" id="UP000001936">
    <property type="component" value="Chromosome"/>
</dbReference>
<dbReference type="GO" id="GO:0005886">
    <property type="term" value="C:plasma membrane"/>
    <property type="evidence" value="ECO:0007669"/>
    <property type="project" value="UniProtKB-SubCell"/>
</dbReference>
<dbReference type="GO" id="GO:0045271">
    <property type="term" value="C:respiratory chain complex I"/>
    <property type="evidence" value="ECO:0007669"/>
    <property type="project" value="TreeGrafter"/>
</dbReference>
<dbReference type="GO" id="GO:0051539">
    <property type="term" value="F:4 iron, 4 sulfur cluster binding"/>
    <property type="evidence" value="ECO:0007669"/>
    <property type="project" value="UniProtKB-KW"/>
</dbReference>
<dbReference type="GO" id="GO:0005506">
    <property type="term" value="F:iron ion binding"/>
    <property type="evidence" value="ECO:0007669"/>
    <property type="project" value="UniProtKB-UniRule"/>
</dbReference>
<dbReference type="GO" id="GO:0008137">
    <property type="term" value="F:NADH dehydrogenase (ubiquinone) activity"/>
    <property type="evidence" value="ECO:0007669"/>
    <property type="project" value="InterPro"/>
</dbReference>
<dbReference type="GO" id="GO:0050136">
    <property type="term" value="F:NADH:ubiquinone reductase (non-electrogenic) activity"/>
    <property type="evidence" value="ECO:0007669"/>
    <property type="project" value="UniProtKB-UniRule"/>
</dbReference>
<dbReference type="GO" id="GO:0048038">
    <property type="term" value="F:quinone binding"/>
    <property type="evidence" value="ECO:0007669"/>
    <property type="project" value="UniProtKB-KW"/>
</dbReference>
<dbReference type="GO" id="GO:0009060">
    <property type="term" value="P:aerobic respiration"/>
    <property type="evidence" value="ECO:0007669"/>
    <property type="project" value="TreeGrafter"/>
</dbReference>
<dbReference type="GO" id="GO:0015990">
    <property type="term" value="P:electron transport coupled proton transport"/>
    <property type="evidence" value="ECO:0007669"/>
    <property type="project" value="TreeGrafter"/>
</dbReference>
<dbReference type="FunFam" id="3.40.50.12280:FF:000001">
    <property type="entry name" value="NADH-quinone oxidoreductase subunit B 2"/>
    <property type="match status" value="1"/>
</dbReference>
<dbReference type="Gene3D" id="3.40.50.12280">
    <property type="match status" value="1"/>
</dbReference>
<dbReference type="HAMAP" id="MF_01356">
    <property type="entry name" value="NDH1_NuoB"/>
    <property type="match status" value="1"/>
</dbReference>
<dbReference type="InterPro" id="IPR006137">
    <property type="entry name" value="NADH_UbQ_OxRdtase-like_20kDa"/>
</dbReference>
<dbReference type="InterPro" id="IPR006138">
    <property type="entry name" value="NADH_UQ_OxRdtase_20Kd_su"/>
</dbReference>
<dbReference type="NCBIfam" id="TIGR01957">
    <property type="entry name" value="nuoB_fam"/>
    <property type="match status" value="1"/>
</dbReference>
<dbReference type="NCBIfam" id="NF005012">
    <property type="entry name" value="PRK06411.1"/>
    <property type="match status" value="1"/>
</dbReference>
<dbReference type="PANTHER" id="PTHR11995">
    <property type="entry name" value="NADH DEHYDROGENASE"/>
    <property type="match status" value="1"/>
</dbReference>
<dbReference type="PANTHER" id="PTHR11995:SF14">
    <property type="entry name" value="NADH DEHYDROGENASE [UBIQUINONE] IRON-SULFUR PROTEIN 7, MITOCHONDRIAL"/>
    <property type="match status" value="1"/>
</dbReference>
<dbReference type="Pfam" id="PF01058">
    <property type="entry name" value="Oxidored_q6"/>
    <property type="match status" value="1"/>
</dbReference>
<dbReference type="SUPFAM" id="SSF56770">
    <property type="entry name" value="HydA/Nqo6-like"/>
    <property type="match status" value="1"/>
</dbReference>
<dbReference type="PROSITE" id="PS01150">
    <property type="entry name" value="COMPLEX1_20K"/>
    <property type="match status" value="1"/>
</dbReference>
<sequence>MGVTPVSNQPLVAQQPKGIIDPSTGKPIGSNDAFFGEINNELADKGFLVTSTDELINWARTGSLMWMTFGLACCAVEMMQLSMPRYDVERFGFAPRASPRQSDVMIVAGTLTNKMAPALRKVYDQMPEPRYVISMGSCANGGGYYHYSYSVVRGCDRVVPIDIYVPGCPPTAEALLYGVLLLQKKIRRTGTIER</sequence>
<organism>
    <name type="scientific">Rhizobium etli (strain ATCC 51251 / DSM 11541 / JCM 21823 / NBRC 15573 / CFN 42)</name>
    <dbReference type="NCBI Taxonomy" id="347834"/>
    <lineage>
        <taxon>Bacteria</taxon>
        <taxon>Pseudomonadati</taxon>
        <taxon>Pseudomonadota</taxon>
        <taxon>Alphaproteobacteria</taxon>
        <taxon>Hyphomicrobiales</taxon>
        <taxon>Rhizobiaceae</taxon>
        <taxon>Rhizobium/Agrobacterium group</taxon>
        <taxon>Rhizobium</taxon>
    </lineage>
</organism>
<protein>
    <recommendedName>
        <fullName evidence="1">NADH-quinone oxidoreductase subunit B 1</fullName>
        <ecNumber evidence="1">7.1.1.-</ecNumber>
    </recommendedName>
    <alternativeName>
        <fullName evidence="1">NADH dehydrogenase I subunit B 1</fullName>
    </alternativeName>
    <alternativeName>
        <fullName evidence="1">NDH-1 subunit B 1</fullName>
    </alternativeName>
</protein>
<accession>Q2K9T4</accession>
<name>NUOB1_RHIEC</name>
<proteinExistence type="inferred from homology"/>
<keyword id="KW-0004">4Fe-4S</keyword>
<keyword id="KW-0997">Cell inner membrane</keyword>
<keyword id="KW-1003">Cell membrane</keyword>
<keyword id="KW-0408">Iron</keyword>
<keyword id="KW-0411">Iron-sulfur</keyword>
<keyword id="KW-0472">Membrane</keyword>
<keyword id="KW-0479">Metal-binding</keyword>
<keyword id="KW-0520">NAD</keyword>
<keyword id="KW-0874">Quinone</keyword>
<keyword id="KW-1185">Reference proteome</keyword>
<keyword id="KW-1278">Translocase</keyword>
<keyword id="KW-0813">Transport</keyword>
<keyword id="KW-0830">Ubiquinone</keyword>
<evidence type="ECO:0000255" key="1">
    <source>
        <dbReference type="HAMAP-Rule" id="MF_01356"/>
    </source>
</evidence>
<evidence type="ECO:0000256" key="2">
    <source>
        <dbReference type="SAM" id="MobiDB-lite"/>
    </source>
</evidence>
<comment type="function">
    <text evidence="1">NDH-1 shuttles electrons from NADH, via FMN and iron-sulfur (Fe-S) centers, to quinones in the respiratory chain. The immediate electron acceptor for the enzyme in this species is believed to be ubiquinone. Couples the redox reaction to proton translocation (for every two electrons transferred, four hydrogen ions are translocated across the cytoplasmic membrane), and thus conserves the redox energy in a proton gradient.</text>
</comment>
<comment type="catalytic activity">
    <reaction evidence="1">
        <text>a quinone + NADH + 5 H(+)(in) = a quinol + NAD(+) + 4 H(+)(out)</text>
        <dbReference type="Rhea" id="RHEA:57888"/>
        <dbReference type="ChEBI" id="CHEBI:15378"/>
        <dbReference type="ChEBI" id="CHEBI:24646"/>
        <dbReference type="ChEBI" id="CHEBI:57540"/>
        <dbReference type="ChEBI" id="CHEBI:57945"/>
        <dbReference type="ChEBI" id="CHEBI:132124"/>
    </reaction>
</comment>
<comment type="cofactor">
    <cofactor evidence="1">
        <name>[4Fe-4S] cluster</name>
        <dbReference type="ChEBI" id="CHEBI:49883"/>
    </cofactor>
    <text evidence="1">Binds 1 [4Fe-4S] cluster.</text>
</comment>
<comment type="subunit">
    <text evidence="1">NDH-1 is composed of 14 different subunits. Subunits NuoB, C, D, E, F, and G constitute the peripheral sector of the complex.</text>
</comment>
<comment type="subcellular location">
    <subcellularLocation>
        <location evidence="1">Cell inner membrane</location>
        <topology evidence="1">Peripheral membrane protein</topology>
        <orientation evidence="1">Cytoplasmic side</orientation>
    </subcellularLocation>
</comment>
<comment type="similarity">
    <text evidence="1">Belongs to the complex I 20 kDa subunit family.</text>
</comment>
<reference key="1">
    <citation type="journal article" date="2006" name="Proc. Natl. Acad. Sci. U.S.A.">
        <title>The partitioned Rhizobium etli genome: genetic and metabolic redundancy in seven interacting replicons.</title>
        <authorList>
            <person name="Gonzalez V."/>
            <person name="Santamaria R.I."/>
            <person name="Bustos P."/>
            <person name="Hernandez-Gonzalez I."/>
            <person name="Medrano-Soto A."/>
            <person name="Moreno-Hagelsieb G."/>
            <person name="Janga S.C."/>
            <person name="Ramirez M.A."/>
            <person name="Jimenez-Jacinto V."/>
            <person name="Collado-Vides J."/>
            <person name="Davila G."/>
        </authorList>
    </citation>
    <scope>NUCLEOTIDE SEQUENCE [LARGE SCALE GENOMIC DNA]</scope>
    <source>
        <strain>ATCC 51251 / DSM 11541 / JCM 21823 / NBRC 15573 / CFN 42</strain>
    </source>
</reference>